<geneLocation type="plasmid">
    <name>60 kb</name>
</geneLocation>
<name>SAKA_LATCU</name>
<reference key="1">
    <citation type="journal article" date="1993" name="Arch. Microbiol.">
        <title>Cloning and sequencing of curA encoding curvacin A, the bacteriocin produced by Lactobacillus curvatus LTH1174.</title>
        <authorList>
            <person name="Tichaczek P.S."/>
            <person name="Vogel R.F."/>
            <person name="Hammes W.P."/>
        </authorList>
    </citation>
    <scope>NUCLEOTIDE SEQUENCE [GENOMIC DNA]</scope>
    <source>
        <strain>LTH1174</strain>
    </source>
</reference>
<reference key="2">
    <citation type="journal article" date="1992" name="Syst. Appl. Microbiol.">
        <title>Characterization of the bacteriocins curvacin A from Lactobacillus curvatus LTH1174 and sakacin P from L. sake LTH673.</title>
        <authorList>
            <person name="Tichaczek P.S."/>
            <person name="Nissen-Meyer J."/>
            <person name="Nes I.F."/>
            <person name="Vogel R.F."/>
            <person name="Hammes W.P."/>
        </authorList>
    </citation>
    <scope>PRELIMINARY PROTEIN SEQUENCE OF 19-59</scope>
    <source>
        <strain>LTH1174</strain>
    </source>
</reference>
<reference key="3">
    <citation type="journal article" date="2005" name="Biochemistry">
        <title>Three-dimensional structure in lipid micelles of the pediocin-like antimicrobial peptide curvacin A.</title>
        <authorList>
            <person name="Haugen H.S."/>
            <person name="Fimland G."/>
            <person name="Nissen-Meyer J."/>
            <person name="Kristiansen P.E."/>
        </authorList>
    </citation>
    <scope>STRUCTURE BY NMR OF 19-59</scope>
    <scope>DISULFIDE BOND</scope>
</reference>
<gene>
    <name type="primary">curA</name>
</gene>
<organism>
    <name type="scientific">Latilactobacillus curvatus</name>
    <name type="common">Lactobacillus curvatus</name>
    <dbReference type="NCBI Taxonomy" id="28038"/>
    <lineage>
        <taxon>Bacteria</taxon>
        <taxon>Bacillati</taxon>
        <taxon>Bacillota</taxon>
        <taxon>Bacilli</taxon>
        <taxon>Lactobacillales</taxon>
        <taxon>Lactobacillaceae</taxon>
        <taxon>Latilactobacillus</taxon>
    </lineage>
</organism>
<evidence type="ECO:0000269" key="1">
    <source>
    </source>
</evidence>
<evidence type="ECO:0000305" key="2"/>
<evidence type="ECO:0007829" key="3">
    <source>
        <dbReference type="PDB" id="2A2B"/>
    </source>
</evidence>
<evidence type="ECO:0007829" key="4">
    <source>
        <dbReference type="PDB" id="7XTG"/>
    </source>
</evidence>
<comment type="function">
    <text>Bactericidal activity; inhibits closely related Lactobacilli, Listeria monocytogenes and ivanovvi, Enterococcus faecalis, Carnobacterium sp and Brocothrix thermosphacta.</text>
</comment>
<comment type="subcellular location">
    <subcellularLocation>
        <location>Secreted</location>
    </subcellularLocation>
</comment>
<comment type="similarity">
    <text evidence="2">Belongs to the bacteriocin class IIA/YGNGV family.</text>
</comment>
<feature type="propeptide" id="PRO_0000002747">
    <location>
        <begin position="1"/>
        <end position="18"/>
    </location>
</feature>
<feature type="chain" id="PRO_0000002748" description="Bacteriocin curvacin-A">
    <location>
        <begin position="19"/>
        <end position="59"/>
    </location>
</feature>
<feature type="disulfide bond" evidence="1">
    <location>
        <begin position="28"/>
        <end position="33"/>
    </location>
</feature>
<feature type="sequence conflict" description="In Ref. 2; AA sequence." evidence="2" ref="2">
    <original>R</original>
    <variation>C</variation>
    <location>
        <position position="20"/>
    </location>
</feature>
<feature type="sequence conflict" description="In Ref. 2; AA sequence." evidence="2" ref="2">
    <original>C</original>
    <variation>S</variation>
    <location>
        <position position="33"/>
    </location>
</feature>
<feature type="strand" evidence="3">
    <location>
        <begin position="22"/>
        <end position="24"/>
    </location>
</feature>
<feature type="strand" evidence="3">
    <location>
        <begin position="29"/>
        <end position="32"/>
    </location>
</feature>
<feature type="helix" evidence="4">
    <location>
        <begin position="37"/>
        <end position="58"/>
    </location>
</feature>
<sequence length="59" mass="6257">MNNVKELSMTELQTITGGARSYGNGVYCNNKKCWVNRGEATQSIIGGMISGWASGLAGM</sequence>
<proteinExistence type="evidence at protein level"/>
<keyword id="KW-0002">3D-structure</keyword>
<keyword id="KW-0044">Antibiotic</keyword>
<keyword id="KW-0929">Antimicrobial</keyword>
<keyword id="KW-0078">Bacteriocin</keyword>
<keyword id="KW-0903">Direct protein sequencing</keyword>
<keyword id="KW-1015">Disulfide bond</keyword>
<keyword id="KW-0614">Plasmid</keyword>
<keyword id="KW-0964">Secreted</keyword>
<accession>P0A311</accession>
<accession>P35619</accession>
<accession>P80097</accession>
<protein>
    <recommendedName>
        <fullName>Bacteriocin curvacin-A</fullName>
    </recommendedName>
</protein>
<dbReference type="EMBL" id="S67323">
    <property type="protein sequence ID" value="AAB28845.1"/>
    <property type="molecule type" value="Genomic_DNA"/>
</dbReference>
<dbReference type="EMBL" id="X72223">
    <property type="protein sequence ID" value="CAA51023.1"/>
    <property type="molecule type" value="Genomic_DNA"/>
</dbReference>
<dbReference type="RefSeq" id="WP_032488606.1">
    <property type="nucleotide sequence ID" value="NZ_JBGQQC010000019.1"/>
</dbReference>
<dbReference type="PDB" id="2A2B">
    <property type="method" value="NMR"/>
    <property type="chains" value="A=19-59"/>
</dbReference>
<dbReference type="PDB" id="7XTG">
    <property type="method" value="EM"/>
    <property type="resolution" value="2.20 A"/>
    <property type="chains" value="A/C/G=19-59"/>
</dbReference>
<dbReference type="PDBsum" id="2A2B"/>
<dbReference type="PDBsum" id="7XTG"/>
<dbReference type="EMDB" id="EMD-33448"/>
<dbReference type="SMR" id="P0A311"/>
<dbReference type="EvolutionaryTrace" id="P0A311"/>
<dbReference type="GO" id="GO:0005576">
    <property type="term" value="C:extracellular region"/>
    <property type="evidence" value="ECO:0007669"/>
    <property type="project" value="UniProtKB-SubCell"/>
</dbReference>
<dbReference type="GO" id="GO:0042742">
    <property type="term" value="P:defense response to bacterium"/>
    <property type="evidence" value="ECO:0007669"/>
    <property type="project" value="UniProtKB-KW"/>
</dbReference>
<dbReference type="GO" id="GO:0031640">
    <property type="term" value="P:killing of cells of another organism"/>
    <property type="evidence" value="ECO:0007669"/>
    <property type="project" value="UniProtKB-KW"/>
</dbReference>
<dbReference type="FunFam" id="1.20.5.130:FF:000001">
    <property type="entry name" value="Bacteriocin hiracin-JM79"/>
    <property type="match status" value="1"/>
</dbReference>
<dbReference type="Gene3D" id="1.20.5.130">
    <property type="match status" value="1"/>
</dbReference>
<dbReference type="InterPro" id="IPR002633">
    <property type="entry name" value="Bacteriocin_IIa"/>
</dbReference>
<dbReference type="InterPro" id="IPR023384">
    <property type="entry name" value="Bacteriocin_IIa_CS"/>
</dbReference>
<dbReference type="InterPro" id="IPR023388">
    <property type="entry name" value="Bacteriocin_IIa_dom_sf"/>
</dbReference>
<dbReference type="InterPro" id="IPR010133">
    <property type="entry name" value="Bacteriocin_signal_seq"/>
</dbReference>
<dbReference type="NCBIfam" id="TIGR01847">
    <property type="entry name" value="bacteriocin_sig"/>
    <property type="match status" value="1"/>
</dbReference>
<dbReference type="Pfam" id="PF01721">
    <property type="entry name" value="Bacteriocin_II"/>
    <property type="match status" value="1"/>
</dbReference>
<dbReference type="PROSITE" id="PS60030">
    <property type="entry name" value="BACTERIOCIN_IIA"/>
    <property type="match status" value="1"/>
</dbReference>